<organism>
    <name type="scientific">Metallosphaera sedula (strain ATCC 51363 / DSM 5348 / JCM 9185 / NBRC 15509 / TH2)</name>
    <dbReference type="NCBI Taxonomy" id="399549"/>
    <lineage>
        <taxon>Archaea</taxon>
        <taxon>Thermoproteota</taxon>
        <taxon>Thermoprotei</taxon>
        <taxon>Sulfolobales</taxon>
        <taxon>Sulfolobaceae</taxon>
        <taxon>Metallosphaera</taxon>
    </lineage>
</organism>
<keyword id="KW-0119">Carbohydrate metabolism</keyword>
<keyword id="KW-0378">Hydrolase</keyword>
<keyword id="KW-0460">Magnesium</keyword>
<keyword id="KW-0479">Metal-binding</keyword>
<keyword id="KW-1185">Reference proteome</keyword>
<accession>A4YIL7</accession>
<sequence length="222" mass="24138">MIKLLLTDLDGTLTEDRGTYVVDIGAIKALRRAEKAGIRVALVSGNSYPVLRGLHNYLGLSGGLVAENGCFVFHGGVTFRVCETVPREVVSEFAKTFNLRESWQNEFRRSDFGFTPAELKDEMIKWAEERGLVVQSSGYALHLSGKPGGKGAGVRKLLELANVKREETGAIGDSRTDIEMFREAGITAAVSNADPELKRVASISLKLKSGAGVMEFIDMLLS</sequence>
<feature type="chain" id="PRO_1000073510" description="Phosphoglycolate phosphatase">
    <location>
        <begin position="1"/>
        <end position="222"/>
    </location>
</feature>
<feature type="active site" description="Nucleophile" evidence="1">
    <location>
        <position position="8"/>
    </location>
</feature>
<feature type="binding site" evidence="1">
    <location>
        <position position="8"/>
    </location>
    <ligand>
        <name>Mg(2+)</name>
        <dbReference type="ChEBI" id="CHEBI:18420"/>
    </ligand>
</feature>
<feature type="binding site" evidence="1">
    <location>
        <position position="10"/>
    </location>
    <ligand>
        <name>Mg(2+)</name>
        <dbReference type="ChEBI" id="CHEBI:18420"/>
    </ligand>
</feature>
<feature type="binding site" evidence="1">
    <location>
        <position position="150"/>
    </location>
    <ligand>
        <name>substrate</name>
    </ligand>
</feature>
<feature type="binding site" evidence="1">
    <location>
        <position position="173"/>
    </location>
    <ligand>
        <name>Mg(2+)</name>
        <dbReference type="ChEBI" id="CHEBI:18420"/>
    </ligand>
</feature>
<feature type="binding site" evidence="1">
    <location>
        <position position="177"/>
    </location>
    <ligand>
        <name>Mg(2+)</name>
        <dbReference type="ChEBI" id="CHEBI:18420"/>
    </ligand>
</feature>
<evidence type="ECO:0000255" key="1">
    <source>
        <dbReference type="HAMAP-Rule" id="MF_01419"/>
    </source>
</evidence>
<dbReference type="EC" id="3.1.3.18" evidence="1"/>
<dbReference type="EMBL" id="CP000682">
    <property type="protein sequence ID" value="ABP96269.1"/>
    <property type="molecule type" value="Genomic_DNA"/>
</dbReference>
<dbReference type="RefSeq" id="WP_012022056.1">
    <property type="nucleotide sequence ID" value="NC_009440.1"/>
</dbReference>
<dbReference type="SMR" id="A4YIL7"/>
<dbReference type="STRING" id="399549.Msed_2130"/>
<dbReference type="GeneID" id="91756668"/>
<dbReference type="KEGG" id="mse:Msed_2130"/>
<dbReference type="eggNOG" id="arCOG01213">
    <property type="taxonomic scope" value="Archaea"/>
</dbReference>
<dbReference type="HOGENOM" id="CLU_044146_2_0_2"/>
<dbReference type="Proteomes" id="UP000000242">
    <property type="component" value="Chromosome"/>
</dbReference>
<dbReference type="GO" id="GO:0005829">
    <property type="term" value="C:cytosol"/>
    <property type="evidence" value="ECO:0007669"/>
    <property type="project" value="TreeGrafter"/>
</dbReference>
<dbReference type="GO" id="GO:0000287">
    <property type="term" value="F:magnesium ion binding"/>
    <property type="evidence" value="ECO:0007669"/>
    <property type="project" value="InterPro"/>
</dbReference>
<dbReference type="GO" id="GO:0008967">
    <property type="term" value="F:phosphoglycolate phosphatase activity"/>
    <property type="evidence" value="ECO:0007669"/>
    <property type="project" value="UniProtKB-UniRule"/>
</dbReference>
<dbReference type="CDD" id="cd07514">
    <property type="entry name" value="HAD_Pase"/>
    <property type="match status" value="1"/>
</dbReference>
<dbReference type="Gene3D" id="3.90.1070.10">
    <property type="match status" value="1"/>
</dbReference>
<dbReference type="Gene3D" id="3.40.50.1000">
    <property type="entry name" value="HAD superfamily/HAD-like"/>
    <property type="match status" value="1"/>
</dbReference>
<dbReference type="HAMAP" id="MF_01419">
    <property type="entry name" value="GPH_hydrolase_arch"/>
    <property type="match status" value="1"/>
</dbReference>
<dbReference type="InterPro" id="IPR036412">
    <property type="entry name" value="HAD-like_sf"/>
</dbReference>
<dbReference type="InterPro" id="IPR006379">
    <property type="entry name" value="HAD-SF_hydro_IIB"/>
</dbReference>
<dbReference type="InterPro" id="IPR023214">
    <property type="entry name" value="HAD_sf"/>
</dbReference>
<dbReference type="InterPro" id="IPR006382">
    <property type="entry name" value="PGPase"/>
</dbReference>
<dbReference type="NCBIfam" id="TIGR01484">
    <property type="entry name" value="HAD-SF-IIB"/>
    <property type="match status" value="1"/>
</dbReference>
<dbReference type="NCBIfam" id="TIGR01487">
    <property type="entry name" value="Pglycolate_arch"/>
    <property type="match status" value="1"/>
</dbReference>
<dbReference type="NCBIfam" id="TIGR01482">
    <property type="entry name" value="SPP-subfamily"/>
    <property type="match status" value="1"/>
</dbReference>
<dbReference type="PANTHER" id="PTHR10000:SF8">
    <property type="entry name" value="HAD SUPERFAMILY HYDROLASE-LIKE, TYPE 3"/>
    <property type="match status" value="1"/>
</dbReference>
<dbReference type="PANTHER" id="PTHR10000">
    <property type="entry name" value="PHOSPHOSERINE PHOSPHATASE"/>
    <property type="match status" value="1"/>
</dbReference>
<dbReference type="Pfam" id="PF08282">
    <property type="entry name" value="Hydrolase_3"/>
    <property type="match status" value="2"/>
</dbReference>
<dbReference type="SFLD" id="SFLDG01140">
    <property type="entry name" value="C2.B:_Phosphomannomutase_and_P"/>
    <property type="match status" value="1"/>
</dbReference>
<dbReference type="SFLD" id="SFLDF00446">
    <property type="entry name" value="phosphoglycolate_phosphatase_3"/>
    <property type="match status" value="1"/>
</dbReference>
<dbReference type="SUPFAM" id="SSF56784">
    <property type="entry name" value="HAD-like"/>
    <property type="match status" value="1"/>
</dbReference>
<gene>
    <name type="ordered locus">Msed_2130</name>
</gene>
<name>PGP_METS5</name>
<comment type="function">
    <text evidence="1">Catalyzes the dephosphorylation of 2-phosphoglycolate.</text>
</comment>
<comment type="catalytic activity">
    <reaction evidence="1">
        <text>2-phosphoglycolate + H2O = glycolate + phosphate</text>
        <dbReference type="Rhea" id="RHEA:14369"/>
        <dbReference type="ChEBI" id="CHEBI:15377"/>
        <dbReference type="ChEBI" id="CHEBI:29805"/>
        <dbReference type="ChEBI" id="CHEBI:43474"/>
        <dbReference type="ChEBI" id="CHEBI:58033"/>
        <dbReference type="EC" id="3.1.3.18"/>
    </reaction>
</comment>
<comment type="cofactor">
    <cofactor evidence="1">
        <name>Mg(2+)</name>
        <dbReference type="ChEBI" id="CHEBI:18420"/>
    </cofactor>
</comment>
<comment type="similarity">
    <text evidence="1">Belongs to the archaeal SPP-like hydrolase family.</text>
</comment>
<proteinExistence type="inferred from homology"/>
<reference key="1">
    <citation type="journal article" date="2008" name="Appl. Environ. Microbiol.">
        <title>The genome sequence of the metal-mobilizing, extremely thermoacidophilic archaeon Metallosphaera sedula provides insights into bioleaching-associated metabolism.</title>
        <authorList>
            <person name="Auernik K.S."/>
            <person name="Maezato Y."/>
            <person name="Blum P.H."/>
            <person name="Kelly R.M."/>
        </authorList>
    </citation>
    <scope>NUCLEOTIDE SEQUENCE [LARGE SCALE GENOMIC DNA]</scope>
    <source>
        <strain>ATCC 51363 / DSM 5348 / JCM 9185 / NBRC 15509 / TH2</strain>
    </source>
</reference>
<protein>
    <recommendedName>
        <fullName evidence="1">Phosphoglycolate phosphatase</fullName>
        <shortName evidence="1">PGP</shortName>
        <shortName evidence="1">PGPase</shortName>
        <ecNumber evidence="1">3.1.3.18</ecNumber>
    </recommendedName>
</protein>